<evidence type="ECO:0000255" key="1"/>
<evidence type="ECO:0000256" key="2">
    <source>
        <dbReference type="SAM" id="MobiDB-lite"/>
    </source>
</evidence>
<evidence type="ECO:0000269" key="3">
    <source>
    </source>
</evidence>
<feature type="signal peptide" evidence="1">
    <location>
        <begin position="1"/>
        <end position="30"/>
    </location>
</feature>
<feature type="chain" id="PRO_0000406514" description="Virulence factor MDV010">
    <location>
        <begin position="31"/>
        <end position="756"/>
    </location>
</feature>
<feature type="region of interest" description="Disordered" evidence="2">
    <location>
        <begin position="96"/>
        <end position="120"/>
    </location>
</feature>
<feature type="compositionally biased region" description="Polar residues" evidence="2">
    <location>
        <begin position="100"/>
        <end position="113"/>
    </location>
</feature>
<feature type="glycosylation site" description="N-linked (GlcNAc...) asparagine; by host" evidence="1">
    <location>
        <position position="222"/>
    </location>
</feature>
<feature type="glycosylation site" description="N-linked (GlcNAc...) asparagine; by host" evidence="1">
    <location>
        <position position="241"/>
    </location>
</feature>
<feature type="glycosylation site" description="N-linked (GlcNAc...) asparagine; by host" evidence="1">
    <location>
        <position position="287"/>
    </location>
</feature>
<feature type="glycosylation site" description="N-linked (GlcNAc...) asparagine; by host" evidence="1">
    <location>
        <position position="423"/>
    </location>
</feature>
<feature type="glycosylation site" description="N-linked (GlcNAc...) asparagine; by host" evidence="1">
    <location>
        <position position="495"/>
    </location>
</feature>
<feature type="glycosylation site" description="N-linked (GlcNAc...) asparagine; by host" evidence="1">
    <location>
        <position position="542"/>
    </location>
</feature>
<feature type="glycosylation site" description="N-linked (GlcNAc...) asparagine; by host" evidence="1">
    <location>
        <position position="552"/>
    </location>
</feature>
<feature type="glycosylation site" description="N-linked (GlcNAc...) asparagine; by host" evidence="1">
    <location>
        <position position="580"/>
    </location>
</feature>
<feature type="glycosylation site" description="N-linked (GlcNAc...) asparagine; by host" evidence="1">
    <location>
        <position position="660"/>
    </location>
</feature>
<feature type="glycosylation site" description="N-linked (GlcNAc...) asparagine; by host" evidence="1">
    <location>
        <position position="684"/>
    </location>
</feature>
<feature type="glycosylation site" description="N-linked (GlcNAc...) asparagine; by host" evidence="1">
    <location>
        <position position="715"/>
    </location>
</feature>
<feature type="glycosylation site" description="N-linked (GlcNAc...) asparagine; by host" evidence="1">
    <location>
        <position position="744"/>
    </location>
</feature>
<gene>
    <name type="primary">MDV010</name>
</gene>
<name>VLIP_GAHVM</name>
<organism>
    <name type="scientific">Gallid herpesvirus 2 (strain Chicken/Md5/ATCC VR-987)</name>
    <name type="common">GaHV-2</name>
    <name type="synonym">Marek's disease herpesvirus type 1</name>
    <dbReference type="NCBI Taxonomy" id="10389"/>
    <lineage>
        <taxon>Viruses</taxon>
        <taxon>Duplodnaviria</taxon>
        <taxon>Heunggongvirae</taxon>
        <taxon>Peploviricota</taxon>
        <taxon>Herviviricetes</taxon>
        <taxon>Herpesvirales</taxon>
        <taxon>Orthoherpesviridae</taxon>
        <taxon>Alphaherpesvirinae</taxon>
        <taxon>Mardivirus</taxon>
        <taxon>Mardivirus gallidalpha2</taxon>
        <taxon>Gallid alphaherpesvirus 2</taxon>
    </lineage>
</organism>
<reference key="1">
    <citation type="journal article" date="2000" name="J. Virol.">
        <title>The genome of a very virulent Marek's disease virus.</title>
        <authorList>
            <person name="Tulman E.R."/>
            <person name="Afonso C.L."/>
            <person name="Lu Z."/>
            <person name="Zsak L."/>
            <person name="Rock D.L."/>
            <person name="Kutish G.F."/>
        </authorList>
    </citation>
    <scope>NUCLEOTIDE SEQUENCE [LARGE SCALE GENOMIC DNA]</scope>
</reference>
<reference key="2">
    <citation type="journal article" date="2005" name="J. Virol.">
        <title>vLIP, a viral lipase homologue, is a virulence factor of Marek's disease virus.</title>
        <authorList>
            <person name="Kamil J.P."/>
            <person name="Tischer B.K."/>
            <person name="Trapp S."/>
            <person name="Nair V.K."/>
            <person name="Osterrieder N."/>
            <person name="Kung H.J."/>
        </authorList>
    </citation>
    <scope>FUNCTION</scope>
</reference>
<protein>
    <recommendedName>
        <fullName>Virulence factor MDV010</fullName>
    </recommendedName>
    <alternativeName>
        <fullName>Viral lipase homolog</fullName>
        <shortName>vLIP</shortName>
    </alternativeName>
</protein>
<proteinExistence type="inferred from homology"/>
<organismHost>
    <name type="scientific">Gallus gallus</name>
    <name type="common">Chicken</name>
    <dbReference type="NCBI Taxonomy" id="9031"/>
</organismHost>
<accession>Q77MS9</accession>
<keyword id="KW-0325">Glycoprotein</keyword>
<keyword id="KW-1185">Reference proteome</keyword>
<keyword id="KW-0964">Secreted</keyword>
<keyword id="KW-0732">Signal</keyword>
<comment type="function">
    <text evidence="3">May play a role in host immune modulation since the protein is secreted and provides an advantage for growth in vivo while it is completely dispensable in cell culture.</text>
</comment>
<comment type="subcellular location">
    <subcellularLocation>
        <location>Secreted</location>
    </subcellularLocation>
</comment>
<comment type="miscellaneous">
    <text>The recombinant protein experimentally lacks lipase activity. Additionally, it possesses an uncharged asparagine instead of an aspartic acid residue at the catalytic-triad acid position found in conventional cellular lipases.</text>
</comment>
<dbReference type="EMBL" id="AF243438">
    <property type="protein sequence ID" value="AAG14190.1"/>
    <property type="molecule type" value="Genomic_DNA"/>
</dbReference>
<dbReference type="RefSeq" id="YP_001033926.1">
    <property type="nucleotide sequence ID" value="NC_002229.3"/>
</dbReference>
<dbReference type="ESTHER" id="mardi-ORF1">
    <property type="family name" value="Avian-virus_vlip"/>
</dbReference>
<dbReference type="GlyCosmos" id="Q77MS9">
    <property type="glycosylation" value="12 sites, No reported glycans"/>
</dbReference>
<dbReference type="GeneID" id="4811470"/>
<dbReference type="KEGG" id="vg:4811470"/>
<dbReference type="Proteomes" id="UP000008072">
    <property type="component" value="Segment"/>
</dbReference>
<dbReference type="GO" id="GO:0005576">
    <property type="term" value="C:extracellular region"/>
    <property type="evidence" value="ECO:0007669"/>
    <property type="project" value="UniProtKB-SubCell"/>
</dbReference>
<dbReference type="Gene3D" id="3.40.50.1820">
    <property type="entry name" value="alpha/beta hydrolase"/>
    <property type="match status" value="1"/>
</dbReference>
<dbReference type="InterPro" id="IPR029058">
    <property type="entry name" value="AB_hydrolase_fold"/>
</dbReference>
<dbReference type="SUPFAM" id="SSF53474">
    <property type="entry name" value="alpha/beta-Hydrolases"/>
    <property type="match status" value="1"/>
</dbReference>
<sequence length="756" mass="84802">MPSKSIADHHAGYGVALAIVALLLIHGTALVMIFSDIKVGSQPQDLKDQLSYPSNYDAYTSHISGADHGHSEMWTDINPPSRKPLHGDSLDIKTNEEHITLSSPRTSTKTTNENGHEKDSKDIKFSFSTNRHPISVSPTTDIVSIAVSHNNPMGGDTWQVSRNGPNTVHVPIYGKPILRLNGEELSTQIAHMSMWDELAGSFKTFAATAESFHMITTTHLFNKTLHKDVFFVVHGWHGITNDTHIFLSAVRLLTRMMPTSCIIYLSWESQGAIGTAADAILLARRVNITQFLSAMPSQLRIHCMGHSLGSYVCGSICRQYHSLMSGICKGILGINPYEVLFSAPDLYARMHVDTIRLDAEYVAIFATTSQYLSTSDSDADEYIIVNDAVFMNSVCANPYEWNIHLCTTGYGELKSCERFGAANVTTSPGVVEDGSQICLRMLPIIAVLQSLDLKSSYPLLRIAPPDASNEVTHLPSIWNIYVVGKDYRYSTYAKNDSLWYSSAICAGDTGFSIPSVFTVFAPPSISLRVRAAVQQSSTIYKNITIYSAFLKNTSRYYPTVTLETLGPILSAYAWRGRMHNSSYYPLPLPEQEIMEYKCTHIDRTYTCIPTDLIYATTVWRQIFSMGHIFPVYPSNNCLPYRPTNAIIWRRPVLEIGVWNNITASFQRNKQLMALTFENHNTATNTTLLTFHDVCRESKIRSVVYFEYDWLETSMNITVLIPGLYTLRWFFPFEIIEMPVRVSYNNSFAQALTTSRV</sequence>